<accession>O05494</accession>
<name>YDHC_BACSU</name>
<feature type="chain" id="PRO_0000050688" description="Uncharacterized HTH-type transcriptional regulator YdhC">
    <location>
        <begin position="1"/>
        <end position="224"/>
    </location>
</feature>
<feature type="domain" description="HTH gntR-type" evidence="1">
    <location>
        <begin position="10"/>
        <end position="77"/>
    </location>
</feature>
<feature type="DNA-binding region" description="H-T-H motif" evidence="1">
    <location>
        <begin position="37"/>
        <end position="56"/>
    </location>
</feature>
<proteinExistence type="predicted"/>
<evidence type="ECO:0000255" key="1">
    <source>
        <dbReference type="PROSITE-ProRule" id="PRU00307"/>
    </source>
</evidence>
<gene>
    <name type="primary">ydhC</name>
    <name type="ordered locus">BSU05700</name>
</gene>
<keyword id="KW-0238">DNA-binding</keyword>
<keyword id="KW-1185">Reference proteome</keyword>
<keyword id="KW-0804">Transcription</keyword>
<keyword id="KW-0805">Transcription regulation</keyword>
<sequence length="224" mass="26396">MDDFKLDKPTPYYLQFYNQLKKMIFNGTFKPGERINETQLAKSFGVSRSPIREAMRLLEKDGLLKADDRNGFSITSLTAKDVDEIYKIRIPLEQLAVELVIDEADEEELTILEKQLEETEKAIHNGTEDTEIIRLNQKFHELLVDFSHNRHLKNLLEHVNDLIHFCRILNYTGDHRAETILREHRRIFEEVKKKNKEAAKQHVLAHFNHDCEHLKHVLEEGKEN</sequence>
<protein>
    <recommendedName>
        <fullName>Uncharacterized HTH-type transcriptional regulator YdhC</fullName>
    </recommendedName>
</protein>
<reference key="1">
    <citation type="journal article" date="1997" name="Microbiology">
        <title>Nucleotide sequence and analysis of the phoB-rrnE-groESL region of the Bacillus subtilis chromosome.</title>
        <authorList>
            <person name="Sadaie Y."/>
            <person name="Yata K."/>
            <person name="Fujita M."/>
            <person name="Sagai H."/>
            <person name="Itaya M."/>
            <person name="Kasahara Y."/>
            <person name="Ogasawara N."/>
        </authorList>
    </citation>
    <scope>NUCLEOTIDE SEQUENCE [GENOMIC DNA]</scope>
    <source>
        <strain>168 / JH642</strain>
    </source>
</reference>
<reference key="2">
    <citation type="journal article" date="1997" name="Nature">
        <title>The complete genome sequence of the Gram-positive bacterium Bacillus subtilis.</title>
        <authorList>
            <person name="Kunst F."/>
            <person name="Ogasawara N."/>
            <person name="Moszer I."/>
            <person name="Albertini A.M."/>
            <person name="Alloni G."/>
            <person name="Azevedo V."/>
            <person name="Bertero M.G."/>
            <person name="Bessieres P."/>
            <person name="Bolotin A."/>
            <person name="Borchert S."/>
            <person name="Borriss R."/>
            <person name="Boursier L."/>
            <person name="Brans A."/>
            <person name="Braun M."/>
            <person name="Brignell S.C."/>
            <person name="Bron S."/>
            <person name="Brouillet S."/>
            <person name="Bruschi C.V."/>
            <person name="Caldwell B."/>
            <person name="Capuano V."/>
            <person name="Carter N.M."/>
            <person name="Choi S.-K."/>
            <person name="Codani J.-J."/>
            <person name="Connerton I.F."/>
            <person name="Cummings N.J."/>
            <person name="Daniel R.A."/>
            <person name="Denizot F."/>
            <person name="Devine K.M."/>
            <person name="Duesterhoeft A."/>
            <person name="Ehrlich S.D."/>
            <person name="Emmerson P.T."/>
            <person name="Entian K.-D."/>
            <person name="Errington J."/>
            <person name="Fabret C."/>
            <person name="Ferrari E."/>
            <person name="Foulger D."/>
            <person name="Fritz C."/>
            <person name="Fujita M."/>
            <person name="Fujita Y."/>
            <person name="Fuma S."/>
            <person name="Galizzi A."/>
            <person name="Galleron N."/>
            <person name="Ghim S.-Y."/>
            <person name="Glaser P."/>
            <person name="Goffeau A."/>
            <person name="Golightly E.J."/>
            <person name="Grandi G."/>
            <person name="Guiseppi G."/>
            <person name="Guy B.J."/>
            <person name="Haga K."/>
            <person name="Haiech J."/>
            <person name="Harwood C.R."/>
            <person name="Henaut A."/>
            <person name="Hilbert H."/>
            <person name="Holsappel S."/>
            <person name="Hosono S."/>
            <person name="Hullo M.-F."/>
            <person name="Itaya M."/>
            <person name="Jones L.-M."/>
            <person name="Joris B."/>
            <person name="Karamata D."/>
            <person name="Kasahara Y."/>
            <person name="Klaerr-Blanchard M."/>
            <person name="Klein C."/>
            <person name="Kobayashi Y."/>
            <person name="Koetter P."/>
            <person name="Koningstein G."/>
            <person name="Krogh S."/>
            <person name="Kumano M."/>
            <person name="Kurita K."/>
            <person name="Lapidus A."/>
            <person name="Lardinois S."/>
            <person name="Lauber J."/>
            <person name="Lazarevic V."/>
            <person name="Lee S.-M."/>
            <person name="Levine A."/>
            <person name="Liu H."/>
            <person name="Masuda S."/>
            <person name="Mauel C."/>
            <person name="Medigue C."/>
            <person name="Medina N."/>
            <person name="Mellado R.P."/>
            <person name="Mizuno M."/>
            <person name="Moestl D."/>
            <person name="Nakai S."/>
            <person name="Noback M."/>
            <person name="Noone D."/>
            <person name="O'Reilly M."/>
            <person name="Ogawa K."/>
            <person name="Ogiwara A."/>
            <person name="Oudega B."/>
            <person name="Park S.-H."/>
            <person name="Parro V."/>
            <person name="Pohl T.M."/>
            <person name="Portetelle D."/>
            <person name="Porwollik S."/>
            <person name="Prescott A.M."/>
            <person name="Presecan E."/>
            <person name="Pujic P."/>
            <person name="Purnelle B."/>
            <person name="Rapoport G."/>
            <person name="Rey M."/>
            <person name="Reynolds S."/>
            <person name="Rieger M."/>
            <person name="Rivolta C."/>
            <person name="Rocha E."/>
            <person name="Roche B."/>
            <person name="Rose M."/>
            <person name="Sadaie Y."/>
            <person name="Sato T."/>
            <person name="Scanlan E."/>
            <person name="Schleich S."/>
            <person name="Schroeter R."/>
            <person name="Scoffone F."/>
            <person name="Sekiguchi J."/>
            <person name="Sekowska A."/>
            <person name="Seror S.J."/>
            <person name="Serror P."/>
            <person name="Shin B.-S."/>
            <person name="Soldo B."/>
            <person name="Sorokin A."/>
            <person name="Tacconi E."/>
            <person name="Takagi T."/>
            <person name="Takahashi H."/>
            <person name="Takemaru K."/>
            <person name="Takeuchi M."/>
            <person name="Tamakoshi A."/>
            <person name="Tanaka T."/>
            <person name="Terpstra P."/>
            <person name="Tognoni A."/>
            <person name="Tosato V."/>
            <person name="Uchiyama S."/>
            <person name="Vandenbol M."/>
            <person name="Vannier F."/>
            <person name="Vassarotti A."/>
            <person name="Viari A."/>
            <person name="Wambutt R."/>
            <person name="Wedler E."/>
            <person name="Wedler H."/>
            <person name="Weitzenegger T."/>
            <person name="Winters P."/>
            <person name="Wipat A."/>
            <person name="Yamamoto H."/>
            <person name="Yamane K."/>
            <person name="Yasumoto K."/>
            <person name="Yata K."/>
            <person name="Yoshida K."/>
            <person name="Yoshikawa H.-F."/>
            <person name="Zumstein E."/>
            <person name="Yoshikawa H."/>
            <person name="Danchin A."/>
        </authorList>
    </citation>
    <scope>NUCLEOTIDE SEQUENCE [LARGE SCALE GENOMIC DNA]</scope>
    <source>
        <strain>168</strain>
    </source>
</reference>
<dbReference type="EMBL" id="D88802">
    <property type="protein sequence ID" value="BAA19694.1"/>
    <property type="molecule type" value="Genomic_DNA"/>
</dbReference>
<dbReference type="EMBL" id="AL009126">
    <property type="protein sequence ID" value="CAB12389.1"/>
    <property type="molecule type" value="Genomic_DNA"/>
</dbReference>
<dbReference type="PIR" id="G69783">
    <property type="entry name" value="G69783"/>
</dbReference>
<dbReference type="RefSeq" id="NP_388451.1">
    <property type="nucleotide sequence ID" value="NC_000964.3"/>
</dbReference>
<dbReference type="RefSeq" id="WP_003234129.1">
    <property type="nucleotide sequence ID" value="NZ_OZ025638.1"/>
</dbReference>
<dbReference type="SMR" id="O05494"/>
<dbReference type="FunCoup" id="O05494">
    <property type="interactions" value="112"/>
</dbReference>
<dbReference type="STRING" id="224308.BSU05700"/>
<dbReference type="PaxDb" id="224308-BSU05700"/>
<dbReference type="EnsemblBacteria" id="CAB12389">
    <property type="protein sequence ID" value="CAB12389"/>
    <property type="gene ID" value="BSU_05700"/>
</dbReference>
<dbReference type="GeneID" id="938042"/>
<dbReference type="KEGG" id="bsu:BSU05700"/>
<dbReference type="PATRIC" id="fig|224308.179.peg.613"/>
<dbReference type="eggNOG" id="COG1802">
    <property type="taxonomic scope" value="Bacteria"/>
</dbReference>
<dbReference type="InParanoid" id="O05494"/>
<dbReference type="OrthoDB" id="114741at2"/>
<dbReference type="PhylomeDB" id="O05494"/>
<dbReference type="BioCyc" id="BSUB:BSU05700-MONOMER"/>
<dbReference type="Proteomes" id="UP000001570">
    <property type="component" value="Chromosome"/>
</dbReference>
<dbReference type="GO" id="GO:0003700">
    <property type="term" value="F:DNA-binding transcription factor activity"/>
    <property type="evidence" value="ECO:0007669"/>
    <property type="project" value="InterPro"/>
</dbReference>
<dbReference type="GO" id="GO:0043565">
    <property type="term" value="F:sequence-specific DNA binding"/>
    <property type="evidence" value="ECO:0007669"/>
    <property type="project" value="InterPro"/>
</dbReference>
<dbReference type="CDD" id="cd07377">
    <property type="entry name" value="WHTH_GntR"/>
    <property type="match status" value="1"/>
</dbReference>
<dbReference type="Gene3D" id="1.20.120.530">
    <property type="entry name" value="GntR ligand-binding domain-like"/>
    <property type="match status" value="1"/>
</dbReference>
<dbReference type="Gene3D" id="1.10.10.10">
    <property type="entry name" value="Winged helix-like DNA-binding domain superfamily/Winged helix DNA-binding domain"/>
    <property type="match status" value="1"/>
</dbReference>
<dbReference type="InterPro" id="IPR000485">
    <property type="entry name" value="AsnC-type_HTH_dom"/>
</dbReference>
<dbReference type="InterPro" id="IPR011711">
    <property type="entry name" value="GntR_C"/>
</dbReference>
<dbReference type="InterPro" id="IPR008920">
    <property type="entry name" value="TF_FadR/GntR_C"/>
</dbReference>
<dbReference type="InterPro" id="IPR000524">
    <property type="entry name" value="Tscrpt_reg_HTH_GntR"/>
</dbReference>
<dbReference type="InterPro" id="IPR036388">
    <property type="entry name" value="WH-like_DNA-bd_sf"/>
</dbReference>
<dbReference type="InterPro" id="IPR036390">
    <property type="entry name" value="WH_DNA-bd_sf"/>
</dbReference>
<dbReference type="PANTHER" id="PTHR43537:SF47">
    <property type="entry name" value="REGULATORY PROTEIN GNTR HTH"/>
    <property type="match status" value="1"/>
</dbReference>
<dbReference type="PANTHER" id="PTHR43537">
    <property type="entry name" value="TRANSCRIPTIONAL REGULATOR, GNTR FAMILY"/>
    <property type="match status" value="1"/>
</dbReference>
<dbReference type="Pfam" id="PF07729">
    <property type="entry name" value="FCD"/>
    <property type="match status" value="1"/>
</dbReference>
<dbReference type="Pfam" id="PF00392">
    <property type="entry name" value="GntR"/>
    <property type="match status" value="1"/>
</dbReference>
<dbReference type="PRINTS" id="PR00033">
    <property type="entry name" value="HTHASNC"/>
</dbReference>
<dbReference type="PRINTS" id="PR00035">
    <property type="entry name" value="HTHGNTR"/>
</dbReference>
<dbReference type="SMART" id="SM00895">
    <property type="entry name" value="FCD"/>
    <property type="match status" value="1"/>
</dbReference>
<dbReference type="SMART" id="SM00345">
    <property type="entry name" value="HTH_GNTR"/>
    <property type="match status" value="1"/>
</dbReference>
<dbReference type="SUPFAM" id="SSF48008">
    <property type="entry name" value="GntR ligand-binding domain-like"/>
    <property type="match status" value="1"/>
</dbReference>
<dbReference type="SUPFAM" id="SSF46785">
    <property type="entry name" value="Winged helix' DNA-binding domain"/>
    <property type="match status" value="1"/>
</dbReference>
<dbReference type="PROSITE" id="PS50949">
    <property type="entry name" value="HTH_GNTR"/>
    <property type="match status" value="1"/>
</dbReference>
<organism>
    <name type="scientific">Bacillus subtilis (strain 168)</name>
    <dbReference type="NCBI Taxonomy" id="224308"/>
    <lineage>
        <taxon>Bacteria</taxon>
        <taxon>Bacillati</taxon>
        <taxon>Bacillota</taxon>
        <taxon>Bacilli</taxon>
        <taxon>Bacillales</taxon>
        <taxon>Bacillaceae</taxon>
        <taxon>Bacillus</taxon>
    </lineage>
</organism>